<keyword id="KW-0963">Cytoplasm</keyword>
<keyword id="KW-0312">Gluconeogenesis</keyword>
<keyword id="KW-0324">Glycolysis</keyword>
<keyword id="KW-0413">Isomerase</keyword>
<feature type="chain" id="PRO_0000180758" description="Glucose-6-phosphate isomerase">
    <location>
        <begin position="1"/>
        <end position="414"/>
    </location>
</feature>
<feature type="active site" description="Proton donor" evidence="1">
    <location>
        <position position="266"/>
    </location>
</feature>
<feature type="active site" evidence="1">
    <location>
        <position position="292"/>
    </location>
</feature>
<feature type="active site" evidence="1">
    <location>
        <position position="405"/>
    </location>
</feature>
<reference key="1">
    <citation type="journal article" date="2004" name="Nat. Biotechnol.">
        <title>The genome sequence of the extreme thermophile Thermus thermophilus.</title>
        <authorList>
            <person name="Henne A."/>
            <person name="Brueggemann H."/>
            <person name="Raasch C."/>
            <person name="Wiezer A."/>
            <person name="Hartsch T."/>
            <person name="Liesegang H."/>
            <person name="Johann A."/>
            <person name="Lienard T."/>
            <person name="Gohl O."/>
            <person name="Martinez-Arias R."/>
            <person name="Jacobi C."/>
            <person name="Starkuviene V."/>
            <person name="Schlenczeck S."/>
            <person name="Dencker S."/>
            <person name="Huber R."/>
            <person name="Klenk H.-P."/>
            <person name="Kramer W."/>
            <person name="Merkl R."/>
            <person name="Gottschalk G."/>
            <person name="Fritz H.-J."/>
        </authorList>
    </citation>
    <scope>NUCLEOTIDE SEQUENCE [LARGE SCALE GENOMIC DNA]</scope>
    <source>
        <strain>ATCC BAA-163 / DSM 7039 / HB27</strain>
    </source>
</reference>
<comment type="function">
    <text evidence="1">Catalyzes the reversible isomerization of glucose-6-phosphate to fructose-6-phosphate.</text>
</comment>
<comment type="catalytic activity">
    <reaction evidence="1">
        <text>alpha-D-glucose 6-phosphate = beta-D-fructose 6-phosphate</text>
        <dbReference type="Rhea" id="RHEA:11816"/>
        <dbReference type="ChEBI" id="CHEBI:57634"/>
        <dbReference type="ChEBI" id="CHEBI:58225"/>
        <dbReference type="EC" id="5.3.1.9"/>
    </reaction>
</comment>
<comment type="pathway">
    <text evidence="1">Carbohydrate biosynthesis; gluconeogenesis.</text>
</comment>
<comment type="pathway">
    <text evidence="1">Carbohydrate degradation; glycolysis; D-glyceraldehyde 3-phosphate and glycerone phosphate from D-glucose: step 2/4.</text>
</comment>
<comment type="subcellular location">
    <subcellularLocation>
        <location evidence="1">Cytoplasm</location>
    </subcellularLocation>
</comment>
<comment type="similarity">
    <text evidence="1">Belongs to the GPI family.</text>
</comment>
<comment type="sequence caution" evidence="2">
    <conflict type="erroneous initiation">
        <sequence resource="EMBL-CDS" id="AAS82052"/>
    </conflict>
</comment>
<accession>Q72GY6</accession>
<proteinExistence type="inferred from homology"/>
<protein>
    <recommendedName>
        <fullName evidence="1">Glucose-6-phosphate isomerase</fullName>
        <shortName evidence="1">GPI</shortName>
        <ecNumber evidence="1">5.3.1.9</ecNumber>
    </recommendedName>
    <alternativeName>
        <fullName evidence="1">Phosphoglucose isomerase</fullName>
        <shortName evidence="1">PGI</shortName>
    </alternativeName>
    <alternativeName>
        <fullName evidence="1">Phosphohexose isomerase</fullName>
        <shortName evidence="1">PHI</shortName>
    </alternativeName>
</protein>
<name>G6PI_THET2</name>
<organism>
    <name type="scientific">Thermus thermophilus (strain ATCC BAA-163 / DSM 7039 / HB27)</name>
    <dbReference type="NCBI Taxonomy" id="262724"/>
    <lineage>
        <taxon>Bacteria</taxon>
        <taxon>Thermotogati</taxon>
        <taxon>Deinococcota</taxon>
        <taxon>Deinococci</taxon>
        <taxon>Thermales</taxon>
        <taxon>Thermaceae</taxon>
        <taxon>Thermus</taxon>
    </lineage>
</organism>
<gene>
    <name evidence="1" type="primary">pgi</name>
    <name type="ordered locus">TT_C1710</name>
</gene>
<sequence length="414" mass="45874">MRLDTRFLSGFPEALSRHGPLLEEARRRLLAKRGEPGSMLGWMDLPEDTETLREVRRYREANPWVEDFVLIGIGGSALGPKALEAAFNESGVRFHYLDHVEPEPTLRLLRTLDPRKTLVNAVSKSGSTAETLAGLAVFLKWLKAHLGEDWRRHLVVTTDPKEGPLRAFAEREGLKAFAIPKEVGGRFSALSPVGLLPLAFAGADLDALLMGARKANETALAPLEESLPLKTALLLHLHRHLPVHVFMVYSERLSHLPSWFVQLHDESLGKVDRQGQRVGTTAVPALGPKDQHAQVQLFREGPLDKLLALVIPEAPLEDVEIPEVGGLEAASYLFGKTLFQLLKAEAEATYEALAEAGQRVYALFLPEVSPYAVGWLMQHLMWQTAFLGELWEVNAFDQPGVELGKVLTRKRLAG</sequence>
<dbReference type="EC" id="5.3.1.9" evidence="1"/>
<dbReference type="EMBL" id="AE017221">
    <property type="protein sequence ID" value="AAS82052.1"/>
    <property type="status" value="ALT_INIT"/>
    <property type="molecule type" value="Genomic_DNA"/>
</dbReference>
<dbReference type="SMR" id="Q72GY6"/>
<dbReference type="KEGG" id="tth:TT_C1710"/>
<dbReference type="eggNOG" id="COG0166">
    <property type="taxonomic scope" value="Bacteria"/>
</dbReference>
<dbReference type="HOGENOM" id="CLU_037303_1_0_0"/>
<dbReference type="UniPathway" id="UPA00109">
    <property type="reaction ID" value="UER00181"/>
</dbReference>
<dbReference type="UniPathway" id="UPA00138"/>
<dbReference type="Proteomes" id="UP000000592">
    <property type="component" value="Chromosome"/>
</dbReference>
<dbReference type="GO" id="GO:0005829">
    <property type="term" value="C:cytosol"/>
    <property type="evidence" value="ECO:0007669"/>
    <property type="project" value="TreeGrafter"/>
</dbReference>
<dbReference type="GO" id="GO:0097367">
    <property type="term" value="F:carbohydrate derivative binding"/>
    <property type="evidence" value="ECO:0007669"/>
    <property type="project" value="InterPro"/>
</dbReference>
<dbReference type="GO" id="GO:0004347">
    <property type="term" value="F:glucose-6-phosphate isomerase activity"/>
    <property type="evidence" value="ECO:0007669"/>
    <property type="project" value="UniProtKB-UniRule"/>
</dbReference>
<dbReference type="GO" id="GO:0048029">
    <property type="term" value="F:monosaccharide binding"/>
    <property type="evidence" value="ECO:0007669"/>
    <property type="project" value="TreeGrafter"/>
</dbReference>
<dbReference type="GO" id="GO:0006094">
    <property type="term" value="P:gluconeogenesis"/>
    <property type="evidence" value="ECO:0007669"/>
    <property type="project" value="UniProtKB-UniRule"/>
</dbReference>
<dbReference type="GO" id="GO:0051156">
    <property type="term" value="P:glucose 6-phosphate metabolic process"/>
    <property type="evidence" value="ECO:0007669"/>
    <property type="project" value="TreeGrafter"/>
</dbReference>
<dbReference type="GO" id="GO:0006096">
    <property type="term" value="P:glycolytic process"/>
    <property type="evidence" value="ECO:0007669"/>
    <property type="project" value="UniProtKB-UniRule"/>
</dbReference>
<dbReference type="CDD" id="cd05015">
    <property type="entry name" value="SIS_PGI_1"/>
    <property type="match status" value="1"/>
</dbReference>
<dbReference type="CDD" id="cd05016">
    <property type="entry name" value="SIS_PGI_2"/>
    <property type="match status" value="1"/>
</dbReference>
<dbReference type="Gene3D" id="3.40.50.10490">
    <property type="entry name" value="Glucose-6-phosphate isomerase like protein, domain 1"/>
    <property type="match status" value="2"/>
</dbReference>
<dbReference type="InterPro" id="IPR001672">
    <property type="entry name" value="G6P_Isomerase"/>
</dbReference>
<dbReference type="InterPro" id="IPR018189">
    <property type="entry name" value="Phosphoglucose_isomerase_CS"/>
</dbReference>
<dbReference type="InterPro" id="IPR046348">
    <property type="entry name" value="SIS_dom_sf"/>
</dbReference>
<dbReference type="InterPro" id="IPR035476">
    <property type="entry name" value="SIS_PGI_1"/>
</dbReference>
<dbReference type="InterPro" id="IPR035482">
    <property type="entry name" value="SIS_PGI_2"/>
</dbReference>
<dbReference type="PANTHER" id="PTHR11469">
    <property type="entry name" value="GLUCOSE-6-PHOSPHATE ISOMERASE"/>
    <property type="match status" value="1"/>
</dbReference>
<dbReference type="PANTHER" id="PTHR11469:SF1">
    <property type="entry name" value="GLUCOSE-6-PHOSPHATE ISOMERASE"/>
    <property type="match status" value="1"/>
</dbReference>
<dbReference type="Pfam" id="PF00342">
    <property type="entry name" value="PGI"/>
    <property type="match status" value="1"/>
</dbReference>
<dbReference type="PRINTS" id="PR00662">
    <property type="entry name" value="G6PISOMERASE"/>
</dbReference>
<dbReference type="SUPFAM" id="SSF53697">
    <property type="entry name" value="SIS domain"/>
    <property type="match status" value="1"/>
</dbReference>
<dbReference type="PROSITE" id="PS00174">
    <property type="entry name" value="P_GLUCOSE_ISOMERASE_2"/>
    <property type="match status" value="1"/>
</dbReference>
<dbReference type="PROSITE" id="PS51463">
    <property type="entry name" value="P_GLUCOSE_ISOMERASE_3"/>
    <property type="match status" value="1"/>
</dbReference>
<evidence type="ECO:0000255" key="1">
    <source>
        <dbReference type="HAMAP-Rule" id="MF_00473"/>
    </source>
</evidence>
<evidence type="ECO:0000305" key="2"/>